<keyword id="KW-0963">Cytoplasm</keyword>
<keyword id="KW-0378">Hydrolase</keyword>
<keyword id="KW-0546">Nucleotide metabolism</keyword>
<keyword id="KW-1185">Reference proteome</keyword>
<reference key="1">
    <citation type="journal article" date="2009" name="PLoS ONE">
        <title>Complete genome sequence of the aerobic CO-oxidizing thermophile Thermomicrobium roseum.</title>
        <authorList>
            <person name="Wu D."/>
            <person name="Raymond J."/>
            <person name="Wu M."/>
            <person name="Chatterji S."/>
            <person name="Ren Q."/>
            <person name="Graham J.E."/>
            <person name="Bryant D.A."/>
            <person name="Robb F."/>
            <person name="Colman A."/>
            <person name="Tallon L.J."/>
            <person name="Badger J.H."/>
            <person name="Madupu R."/>
            <person name="Ward N.L."/>
            <person name="Eisen J.A."/>
        </authorList>
    </citation>
    <scope>NUCLEOTIDE SEQUENCE [LARGE SCALE GENOMIC DNA]</scope>
    <source>
        <strain>ATCC 27502 / DSM 5159 / P-2</strain>
    </source>
</reference>
<organism>
    <name type="scientific">Thermomicrobium roseum (strain ATCC 27502 / DSM 5159 / P-2)</name>
    <dbReference type="NCBI Taxonomy" id="309801"/>
    <lineage>
        <taxon>Bacteria</taxon>
        <taxon>Pseudomonadati</taxon>
        <taxon>Thermomicrobiota</taxon>
        <taxon>Thermomicrobia</taxon>
        <taxon>Thermomicrobiales</taxon>
        <taxon>Thermomicrobiaceae</taxon>
        <taxon>Thermomicrobium</taxon>
    </lineage>
</organism>
<sequence>MTLVLASASPRRRALLAVLGIPFVVDPAAIDEPLPERHSHPERIARALARHKATVVAARRPGDWVLAADTVVVFRGRLLGKPESAEEAHAMLRLLRGRWHRVITAVALARGRRRWVDHTTTWVLMRQYSDEDITASIARGEPFDKAGGYAIQDPDLRPVESWRGCYCNVVGLSIWLTWRLLQQAGFPVSTPDERTLPPVCQQCPLAPAEVTSRTANRE</sequence>
<feature type="chain" id="PRO_1000146299" description="dTTP/UTP pyrophosphatase">
    <location>
        <begin position="1"/>
        <end position="218"/>
    </location>
</feature>
<feature type="active site" description="Proton acceptor" evidence="1">
    <location>
        <position position="69"/>
    </location>
</feature>
<feature type="site" description="Important for substrate specificity" evidence="1">
    <location>
        <position position="11"/>
    </location>
</feature>
<feature type="site" description="Important for substrate specificity" evidence="1">
    <location>
        <position position="70"/>
    </location>
</feature>
<feature type="site" description="Important for substrate specificity" evidence="1">
    <location>
        <position position="152"/>
    </location>
</feature>
<protein>
    <recommendedName>
        <fullName evidence="1">dTTP/UTP pyrophosphatase</fullName>
        <shortName evidence="1">dTTPase/UTPase</shortName>
        <ecNumber evidence="1">3.6.1.9</ecNumber>
    </recommendedName>
    <alternativeName>
        <fullName evidence="1">Nucleoside triphosphate pyrophosphatase</fullName>
    </alternativeName>
    <alternativeName>
        <fullName evidence="1">Nucleotide pyrophosphatase</fullName>
        <shortName evidence="1">Nucleotide PPase</shortName>
    </alternativeName>
</protein>
<name>NTPPA_THERP</name>
<gene>
    <name type="ordered locus">trd_0215</name>
</gene>
<comment type="function">
    <text evidence="1">Nucleoside triphosphate pyrophosphatase that hydrolyzes dTTP and UTP. May have a dual role in cell division arrest and in preventing the incorporation of modified nucleotides into cellular nucleic acids.</text>
</comment>
<comment type="catalytic activity">
    <reaction evidence="1">
        <text>dTTP + H2O = dTMP + diphosphate + H(+)</text>
        <dbReference type="Rhea" id="RHEA:28534"/>
        <dbReference type="ChEBI" id="CHEBI:15377"/>
        <dbReference type="ChEBI" id="CHEBI:15378"/>
        <dbReference type="ChEBI" id="CHEBI:33019"/>
        <dbReference type="ChEBI" id="CHEBI:37568"/>
        <dbReference type="ChEBI" id="CHEBI:63528"/>
        <dbReference type="EC" id="3.6.1.9"/>
    </reaction>
</comment>
<comment type="catalytic activity">
    <reaction evidence="1">
        <text>UTP + H2O = UMP + diphosphate + H(+)</text>
        <dbReference type="Rhea" id="RHEA:29395"/>
        <dbReference type="ChEBI" id="CHEBI:15377"/>
        <dbReference type="ChEBI" id="CHEBI:15378"/>
        <dbReference type="ChEBI" id="CHEBI:33019"/>
        <dbReference type="ChEBI" id="CHEBI:46398"/>
        <dbReference type="ChEBI" id="CHEBI:57865"/>
        <dbReference type="EC" id="3.6.1.9"/>
    </reaction>
</comment>
<comment type="cofactor">
    <cofactor evidence="1">
        <name>a divalent metal cation</name>
        <dbReference type="ChEBI" id="CHEBI:60240"/>
    </cofactor>
</comment>
<comment type="subcellular location">
    <subcellularLocation>
        <location evidence="1">Cytoplasm</location>
    </subcellularLocation>
</comment>
<comment type="similarity">
    <text evidence="1">Belongs to the Maf family. YhdE subfamily.</text>
</comment>
<proteinExistence type="inferred from homology"/>
<accession>B9KXM8</accession>
<evidence type="ECO:0000255" key="1">
    <source>
        <dbReference type="HAMAP-Rule" id="MF_00528"/>
    </source>
</evidence>
<dbReference type="EC" id="3.6.1.9" evidence="1"/>
<dbReference type="EMBL" id="CP001275">
    <property type="protein sequence ID" value="ACM05044.1"/>
    <property type="molecule type" value="Genomic_DNA"/>
</dbReference>
<dbReference type="RefSeq" id="WP_012641628.1">
    <property type="nucleotide sequence ID" value="NC_011959.1"/>
</dbReference>
<dbReference type="SMR" id="B9KXM8"/>
<dbReference type="STRING" id="309801.trd_0215"/>
<dbReference type="KEGG" id="tro:trd_0215"/>
<dbReference type="eggNOG" id="COG0424">
    <property type="taxonomic scope" value="Bacteria"/>
</dbReference>
<dbReference type="HOGENOM" id="CLU_040416_2_1_0"/>
<dbReference type="OrthoDB" id="9807767at2"/>
<dbReference type="Proteomes" id="UP000000447">
    <property type="component" value="Chromosome"/>
</dbReference>
<dbReference type="GO" id="GO:0005737">
    <property type="term" value="C:cytoplasm"/>
    <property type="evidence" value="ECO:0007669"/>
    <property type="project" value="UniProtKB-SubCell"/>
</dbReference>
<dbReference type="GO" id="GO:0036218">
    <property type="term" value="F:dTTP diphosphatase activity"/>
    <property type="evidence" value="ECO:0007669"/>
    <property type="project" value="RHEA"/>
</dbReference>
<dbReference type="GO" id="GO:0036221">
    <property type="term" value="F:UTP diphosphatase activity"/>
    <property type="evidence" value="ECO:0007669"/>
    <property type="project" value="RHEA"/>
</dbReference>
<dbReference type="GO" id="GO:0009117">
    <property type="term" value="P:nucleotide metabolic process"/>
    <property type="evidence" value="ECO:0007669"/>
    <property type="project" value="UniProtKB-KW"/>
</dbReference>
<dbReference type="CDD" id="cd00555">
    <property type="entry name" value="Maf"/>
    <property type="match status" value="1"/>
</dbReference>
<dbReference type="Gene3D" id="3.90.950.10">
    <property type="match status" value="1"/>
</dbReference>
<dbReference type="HAMAP" id="MF_00528">
    <property type="entry name" value="Maf"/>
    <property type="match status" value="1"/>
</dbReference>
<dbReference type="InterPro" id="IPR029001">
    <property type="entry name" value="ITPase-like_fam"/>
</dbReference>
<dbReference type="InterPro" id="IPR003697">
    <property type="entry name" value="Maf-like"/>
</dbReference>
<dbReference type="NCBIfam" id="TIGR00172">
    <property type="entry name" value="maf"/>
    <property type="match status" value="1"/>
</dbReference>
<dbReference type="PANTHER" id="PTHR43213">
    <property type="entry name" value="BIFUNCTIONAL DTTP/UTP PYROPHOSPHATASE/METHYLTRANSFERASE PROTEIN-RELATED"/>
    <property type="match status" value="1"/>
</dbReference>
<dbReference type="PANTHER" id="PTHR43213:SF5">
    <property type="entry name" value="BIFUNCTIONAL DTTP_UTP PYROPHOSPHATASE_METHYLTRANSFERASE PROTEIN-RELATED"/>
    <property type="match status" value="1"/>
</dbReference>
<dbReference type="Pfam" id="PF02545">
    <property type="entry name" value="Maf"/>
    <property type="match status" value="1"/>
</dbReference>
<dbReference type="PIRSF" id="PIRSF006305">
    <property type="entry name" value="Maf"/>
    <property type="match status" value="1"/>
</dbReference>
<dbReference type="SUPFAM" id="SSF52972">
    <property type="entry name" value="ITPase-like"/>
    <property type="match status" value="1"/>
</dbReference>